<reference key="1">
    <citation type="journal article" date="2003" name="Mol. Biol. Evol.">
        <title>Analysis of the Amborella trichopoda chloroplast genome sequence suggests that Amborella is not a basal angiosperm.</title>
        <authorList>
            <person name="Goremykin V.V."/>
            <person name="Hirsch-Ernst K.I."/>
            <person name="Wolfl S."/>
            <person name="Hellwig F.H."/>
        </authorList>
    </citation>
    <scope>NUCLEOTIDE SEQUENCE [LARGE SCALE GENOMIC DNA]</scope>
</reference>
<accession>Q70XX5</accession>
<keyword id="KW-0150">Chloroplast</keyword>
<keyword id="KW-0934">Plastid</keyword>
<keyword id="KW-1185">Reference proteome</keyword>
<keyword id="KW-0687">Ribonucleoprotein</keyword>
<keyword id="KW-0689">Ribosomal protein</keyword>
<keyword id="KW-0694">RNA-binding</keyword>
<keyword id="KW-0699">rRNA-binding</keyword>
<organism>
    <name type="scientific">Amborella trichopoda</name>
    <dbReference type="NCBI Taxonomy" id="13333"/>
    <lineage>
        <taxon>Eukaryota</taxon>
        <taxon>Viridiplantae</taxon>
        <taxon>Streptophyta</taxon>
        <taxon>Embryophyta</taxon>
        <taxon>Tracheophyta</taxon>
        <taxon>Spermatophyta</taxon>
        <taxon>Magnoliopsida</taxon>
        <taxon>Amborellales</taxon>
        <taxon>Amborellaceae</taxon>
        <taxon>Amborella</taxon>
    </lineage>
</organism>
<evidence type="ECO:0000250" key="1"/>
<evidence type="ECO:0000305" key="2"/>
<gene>
    <name type="primary">rps8</name>
</gene>
<proteinExistence type="inferred from homology"/>
<feature type="chain" id="PRO_0000126559" description="Small ribosomal subunit protein uS8c">
    <location>
        <begin position="1"/>
        <end position="132"/>
    </location>
</feature>
<name>RR8_AMBTC</name>
<comment type="function">
    <text evidence="1">One of the primary rRNA binding proteins, it binds directly to 16S rRNA central domain where it helps coordinate assembly of the platform of the 30S subunit.</text>
</comment>
<comment type="subunit">
    <text evidence="1">Part of the 30S ribosomal subunit.</text>
</comment>
<comment type="subcellular location">
    <subcellularLocation>
        <location>Plastid</location>
        <location>Chloroplast</location>
    </subcellularLocation>
</comment>
<comment type="similarity">
    <text evidence="2">Belongs to the universal ribosomal protein uS8 family.</text>
</comment>
<protein>
    <recommendedName>
        <fullName evidence="2">Small ribosomal subunit protein uS8c</fullName>
    </recommendedName>
    <alternativeName>
        <fullName>30S ribosomal protein S8, chloroplastic</fullName>
    </alternativeName>
</protein>
<dbReference type="EMBL" id="AJ506156">
    <property type="protein sequence ID" value="CAD45142.1"/>
    <property type="molecule type" value="Genomic_DNA"/>
</dbReference>
<dbReference type="RefSeq" id="NP_904134.1">
    <property type="nucleotide sequence ID" value="NC_005086.1"/>
</dbReference>
<dbReference type="SMR" id="Q70XX5"/>
<dbReference type="STRING" id="13333.Q70XX5"/>
<dbReference type="GeneID" id="2546560"/>
<dbReference type="KEGG" id="atr:2546560"/>
<dbReference type="OrthoDB" id="409928at2759"/>
<dbReference type="Proteomes" id="UP000017836">
    <property type="component" value="Chloroplast"/>
</dbReference>
<dbReference type="GO" id="GO:0009507">
    <property type="term" value="C:chloroplast"/>
    <property type="evidence" value="ECO:0007669"/>
    <property type="project" value="UniProtKB-SubCell"/>
</dbReference>
<dbReference type="GO" id="GO:1990904">
    <property type="term" value="C:ribonucleoprotein complex"/>
    <property type="evidence" value="ECO:0007669"/>
    <property type="project" value="UniProtKB-KW"/>
</dbReference>
<dbReference type="GO" id="GO:0005840">
    <property type="term" value="C:ribosome"/>
    <property type="evidence" value="ECO:0007669"/>
    <property type="project" value="UniProtKB-KW"/>
</dbReference>
<dbReference type="GO" id="GO:0019843">
    <property type="term" value="F:rRNA binding"/>
    <property type="evidence" value="ECO:0007669"/>
    <property type="project" value="UniProtKB-UniRule"/>
</dbReference>
<dbReference type="GO" id="GO:0003735">
    <property type="term" value="F:structural constituent of ribosome"/>
    <property type="evidence" value="ECO:0000318"/>
    <property type="project" value="GO_Central"/>
</dbReference>
<dbReference type="GO" id="GO:0006412">
    <property type="term" value="P:translation"/>
    <property type="evidence" value="ECO:0007669"/>
    <property type="project" value="UniProtKB-UniRule"/>
</dbReference>
<dbReference type="FunFam" id="3.30.1490.10:FF:000001">
    <property type="entry name" value="30S ribosomal protein S8"/>
    <property type="match status" value="1"/>
</dbReference>
<dbReference type="FunFam" id="3.30.1370.30:FF:000004">
    <property type="entry name" value="30S ribosomal protein S8, chloroplastic"/>
    <property type="match status" value="1"/>
</dbReference>
<dbReference type="Gene3D" id="3.30.1370.30">
    <property type="match status" value="1"/>
</dbReference>
<dbReference type="Gene3D" id="3.30.1490.10">
    <property type="match status" value="1"/>
</dbReference>
<dbReference type="HAMAP" id="MF_01302_B">
    <property type="entry name" value="Ribosomal_uS8_B"/>
    <property type="match status" value="1"/>
</dbReference>
<dbReference type="InterPro" id="IPR000630">
    <property type="entry name" value="Ribosomal_uS8"/>
</dbReference>
<dbReference type="InterPro" id="IPR047863">
    <property type="entry name" value="Ribosomal_uS8_CS"/>
</dbReference>
<dbReference type="InterPro" id="IPR035987">
    <property type="entry name" value="Ribosomal_uS8_sf"/>
</dbReference>
<dbReference type="NCBIfam" id="NF001109">
    <property type="entry name" value="PRK00136.1"/>
    <property type="match status" value="1"/>
</dbReference>
<dbReference type="PANTHER" id="PTHR11758">
    <property type="entry name" value="40S RIBOSOMAL PROTEIN S15A"/>
    <property type="match status" value="1"/>
</dbReference>
<dbReference type="Pfam" id="PF00410">
    <property type="entry name" value="Ribosomal_S8"/>
    <property type="match status" value="1"/>
</dbReference>
<dbReference type="SUPFAM" id="SSF56047">
    <property type="entry name" value="Ribosomal protein S8"/>
    <property type="match status" value="1"/>
</dbReference>
<dbReference type="PROSITE" id="PS00053">
    <property type="entry name" value="RIBOSOMAL_S8"/>
    <property type="match status" value="1"/>
</dbReference>
<geneLocation type="chloroplast"/>
<sequence length="132" mass="15349">MGRDTIANIITCIRNADMDKKRMVRIASTNITENIVKIILQEGFIENVRKHRENNKNFLVLTLRHKRNRKGTYRKTLKRISRSGLRIYSNYQRIPRISGGMGVVILSTSRGIMTDREARREGIGGEILCYIW</sequence>